<gene>
    <name evidence="1" type="primary">frr</name>
    <name type="ordered locus">HDEF_1309</name>
</gene>
<protein>
    <recommendedName>
        <fullName evidence="1">Ribosome-recycling factor</fullName>
        <shortName evidence="1">RRF</shortName>
    </recommendedName>
    <alternativeName>
        <fullName evidence="1">Ribosome-releasing factor</fullName>
    </alternativeName>
</protein>
<name>RRF_HAMD5</name>
<sequence>MISKIETETQSRMEKCTESFESQIKKIRTGRASPSILDSIQVEYYGASTPLRQLANIVAEDSSHLAVTVFDRNLTPYIEKAIQNSPLGLNPSSAANLIRVPLPPLTEDRRKELIKVIRSEAEAARVAVRNIRASVNKKSKETLKKKEISEDEDRQIQDNVQKLTDRYIKKIDEFLTKKEKEVMTV</sequence>
<comment type="function">
    <text evidence="1">Responsible for the release of ribosomes from messenger RNA at the termination of protein biosynthesis. May increase the efficiency of translation by recycling ribosomes from one round of translation to another.</text>
</comment>
<comment type="subcellular location">
    <subcellularLocation>
        <location evidence="1">Cytoplasm</location>
    </subcellularLocation>
</comment>
<comment type="similarity">
    <text evidence="1">Belongs to the RRF family.</text>
</comment>
<evidence type="ECO:0000255" key="1">
    <source>
        <dbReference type="HAMAP-Rule" id="MF_00040"/>
    </source>
</evidence>
<dbReference type="EMBL" id="CP001277">
    <property type="protein sequence ID" value="ACQ67959.1"/>
    <property type="molecule type" value="Genomic_DNA"/>
</dbReference>
<dbReference type="RefSeq" id="WP_015873748.1">
    <property type="nucleotide sequence ID" value="NC_012751.1"/>
</dbReference>
<dbReference type="SMR" id="C4K5W6"/>
<dbReference type="STRING" id="572265.HDEF_1309"/>
<dbReference type="GeneID" id="66261003"/>
<dbReference type="KEGG" id="hde:HDEF_1309"/>
<dbReference type="eggNOG" id="COG0233">
    <property type="taxonomic scope" value="Bacteria"/>
</dbReference>
<dbReference type="HOGENOM" id="CLU_073981_2_0_6"/>
<dbReference type="Proteomes" id="UP000002334">
    <property type="component" value="Chromosome"/>
</dbReference>
<dbReference type="GO" id="GO:0005829">
    <property type="term" value="C:cytosol"/>
    <property type="evidence" value="ECO:0007669"/>
    <property type="project" value="GOC"/>
</dbReference>
<dbReference type="GO" id="GO:0043023">
    <property type="term" value="F:ribosomal large subunit binding"/>
    <property type="evidence" value="ECO:0007669"/>
    <property type="project" value="TreeGrafter"/>
</dbReference>
<dbReference type="GO" id="GO:0002184">
    <property type="term" value="P:cytoplasmic translational termination"/>
    <property type="evidence" value="ECO:0007669"/>
    <property type="project" value="TreeGrafter"/>
</dbReference>
<dbReference type="CDD" id="cd00520">
    <property type="entry name" value="RRF"/>
    <property type="match status" value="1"/>
</dbReference>
<dbReference type="FunFam" id="1.10.132.20:FF:000001">
    <property type="entry name" value="Ribosome-recycling factor"/>
    <property type="match status" value="1"/>
</dbReference>
<dbReference type="FunFam" id="3.30.1360.40:FF:000001">
    <property type="entry name" value="Ribosome-recycling factor"/>
    <property type="match status" value="1"/>
</dbReference>
<dbReference type="Gene3D" id="3.30.1360.40">
    <property type="match status" value="1"/>
</dbReference>
<dbReference type="Gene3D" id="1.10.132.20">
    <property type="entry name" value="Ribosome-recycling factor"/>
    <property type="match status" value="1"/>
</dbReference>
<dbReference type="HAMAP" id="MF_00040">
    <property type="entry name" value="RRF"/>
    <property type="match status" value="1"/>
</dbReference>
<dbReference type="InterPro" id="IPR002661">
    <property type="entry name" value="Ribosome_recyc_fac"/>
</dbReference>
<dbReference type="InterPro" id="IPR023584">
    <property type="entry name" value="Ribosome_recyc_fac_dom"/>
</dbReference>
<dbReference type="InterPro" id="IPR036191">
    <property type="entry name" value="RRF_sf"/>
</dbReference>
<dbReference type="NCBIfam" id="TIGR00496">
    <property type="entry name" value="frr"/>
    <property type="match status" value="1"/>
</dbReference>
<dbReference type="PANTHER" id="PTHR20982:SF3">
    <property type="entry name" value="MITOCHONDRIAL RIBOSOME RECYCLING FACTOR PSEUDO 1"/>
    <property type="match status" value="1"/>
</dbReference>
<dbReference type="PANTHER" id="PTHR20982">
    <property type="entry name" value="RIBOSOME RECYCLING FACTOR"/>
    <property type="match status" value="1"/>
</dbReference>
<dbReference type="Pfam" id="PF01765">
    <property type="entry name" value="RRF"/>
    <property type="match status" value="1"/>
</dbReference>
<dbReference type="SUPFAM" id="SSF55194">
    <property type="entry name" value="Ribosome recycling factor, RRF"/>
    <property type="match status" value="1"/>
</dbReference>
<keyword id="KW-0963">Cytoplasm</keyword>
<keyword id="KW-0648">Protein biosynthesis</keyword>
<proteinExistence type="inferred from homology"/>
<reference key="1">
    <citation type="journal article" date="2009" name="Proc. Natl. Acad. Sci. U.S.A.">
        <title>Hamiltonella defensa, genome evolution of protective bacterial endosymbiont from pathogenic ancestors.</title>
        <authorList>
            <person name="Degnan P.H."/>
            <person name="Yu Y."/>
            <person name="Sisneros N."/>
            <person name="Wing R.A."/>
            <person name="Moran N.A."/>
        </authorList>
    </citation>
    <scope>NUCLEOTIDE SEQUENCE [LARGE SCALE GENOMIC DNA]</scope>
    <source>
        <strain>5AT</strain>
    </source>
</reference>
<organism>
    <name type="scientific">Hamiltonella defensa subsp. Acyrthosiphon pisum (strain 5AT)</name>
    <dbReference type="NCBI Taxonomy" id="572265"/>
    <lineage>
        <taxon>Bacteria</taxon>
        <taxon>Pseudomonadati</taxon>
        <taxon>Pseudomonadota</taxon>
        <taxon>Gammaproteobacteria</taxon>
        <taxon>Enterobacterales</taxon>
        <taxon>Enterobacteriaceae</taxon>
        <taxon>aphid secondary symbionts</taxon>
        <taxon>Candidatus Hamiltonella</taxon>
    </lineage>
</organism>
<feature type="chain" id="PRO_1000202101" description="Ribosome-recycling factor">
    <location>
        <begin position="1"/>
        <end position="185"/>
    </location>
</feature>
<accession>C4K5W6</accession>